<gene>
    <name evidence="1" type="primary">atpB</name>
    <name type="ordered locus">amb3993</name>
</gene>
<comment type="function">
    <text evidence="1">Key component of the proton channel; it plays a direct role in the translocation of protons across the membrane.</text>
</comment>
<comment type="subunit">
    <text evidence="1">F-type ATPases have 2 components, CF(1) - the catalytic core - and CF(0) - the membrane proton channel. CF(1) has five subunits: alpha(3), beta(3), gamma(1), delta(1), epsilon(1). CF(0) has three main subunits: a(1), b(2) and c(9-12). The alpha and beta chains form an alternating ring which encloses part of the gamma chain. CF(1) is attached to CF(0) by a central stalk formed by the gamma and epsilon chains, while a peripheral stalk is formed by the delta and b chains.</text>
</comment>
<comment type="subcellular location">
    <subcellularLocation>
        <location evidence="1">Cell inner membrane</location>
        <topology evidence="1">Multi-pass membrane protein</topology>
    </subcellularLocation>
</comment>
<comment type="similarity">
    <text evidence="1">Belongs to the ATPase A chain family.</text>
</comment>
<keyword id="KW-0066">ATP synthesis</keyword>
<keyword id="KW-0997">Cell inner membrane</keyword>
<keyword id="KW-1003">Cell membrane</keyword>
<keyword id="KW-0138">CF(0)</keyword>
<keyword id="KW-0375">Hydrogen ion transport</keyword>
<keyword id="KW-0406">Ion transport</keyword>
<keyword id="KW-0472">Membrane</keyword>
<keyword id="KW-0812">Transmembrane</keyword>
<keyword id="KW-1133">Transmembrane helix</keyword>
<keyword id="KW-0813">Transport</keyword>
<protein>
    <recommendedName>
        <fullName evidence="1">ATP synthase subunit a</fullName>
    </recommendedName>
    <alternativeName>
        <fullName evidence="1">ATP synthase F0 sector subunit a</fullName>
    </alternativeName>
    <alternativeName>
        <fullName evidence="1">F-ATPase subunit 6</fullName>
    </alternativeName>
</protein>
<reference key="1">
    <citation type="journal article" date="2005" name="DNA Res.">
        <title>Complete genome sequence of the facultative anaerobic magnetotactic bacterium Magnetospirillum sp. strain AMB-1.</title>
        <authorList>
            <person name="Matsunaga T."/>
            <person name="Okamura Y."/>
            <person name="Fukuda Y."/>
            <person name="Wahyudi A.T."/>
            <person name="Murase Y."/>
            <person name="Takeyama H."/>
        </authorList>
    </citation>
    <scope>NUCLEOTIDE SEQUENCE [LARGE SCALE GENOMIC DNA]</scope>
    <source>
        <strain>ATCC 700264 / AMB-1</strain>
    </source>
</reference>
<accession>Q2W028</accession>
<organism>
    <name type="scientific">Paramagnetospirillum magneticum (strain ATCC 700264 / AMB-1)</name>
    <name type="common">Magnetospirillum magneticum</name>
    <dbReference type="NCBI Taxonomy" id="342108"/>
    <lineage>
        <taxon>Bacteria</taxon>
        <taxon>Pseudomonadati</taxon>
        <taxon>Pseudomonadota</taxon>
        <taxon>Alphaproteobacteria</taxon>
        <taxon>Rhodospirillales</taxon>
        <taxon>Magnetospirillaceae</taxon>
        <taxon>Paramagnetospirillum</taxon>
    </lineage>
</organism>
<sequence length="247" mass="27374">MANPIEQFKIQPLVPLKVGSVDISFTNSSAMMVLSICLITLFLTLSVRSRALVPGRWQSMAEVFYEFIAGMLRDNVGQEGRKYFPFIFSLFMFVLFGNLLGMMPIPVIGFTYTSHVIVTFAMALVVFVGVTVIGFARHGTHYLRMFFPHGAPIATAVILIPIELISYFSRPFSLAVRLFANMTVGHIILKVMGGFVVSLGAFYLIPGAVPFAFLSAITVLEFGIALLQAYVFTILSCIYLHDAIHMH</sequence>
<name>ATP6_PARM1</name>
<proteinExistence type="inferred from homology"/>
<feature type="chain" id="PRO_0000362340" description="ATP synthase subunit a">
    <location>
        <begin position="1"/>
        <end position="247"/>
    </location>
</feature>
<feature type="transmembrane region" description="Helical" evidence="1">
    <location>
        <begin position="23"/>
        <end position="43"/>
    </location>
</feature>
<feature type="transmembrane region" description="Helical" evidence="1">
    <location>
        <begin position="90"/>
        <end position="110"/>
    </location>
</feature>
<feature type="transmembrane region" description="Helical" evidence="1">
    <location>
        <begin position="116"/>
        <end position="136"/>
    </location>
</feature>
<feature type="transmembrane region" description="Helical" evidence="1">
    <location>
        <begin position="145"/>
        <end position="165"/>
    </location>
</feature>
<feature type="transmembrane region" description="Helical" evidence="1">
    <location>
        <begin position="194"/>
        <end position="214"/>
    </location>
</feature>
<feature type="transmembrane region" description="Helical" evidence="1">
    <location>
        <begin position="215"/>
        <end position="235"/>
    </location>
</feature>
<dbReference type="EMBL" id="AP007255">
    <property type="protein sequence ID" value="BAE52797.1"/>
    <property type="molecule type" value="Genomic_DNA"/>
</dbReference>
<dbReference type="RefSeq" id="WP_011386347.1">
    <property type="nucleotide sequence ID" value="NC_007626.1"/>
</dbReference>
<dbReference type="SMR" id="Q2W028"/>
<dbReference type="STRING" id="342108.amb3993"/>
<dbReference type="KEGG" id="mag:amb3993"/>
<dbReference type="HOGENOM" id="CLU_041018_0_2_5"/>
<dbReference type="OrthoDB" id="9809130at2"/>
<dbReference type="Proteomes" id="UP000007058">
    <property type="component" value="Chromosome"/>
</dbReference>
<dbReference type="GO" id="GO:0005886">
    <property type="term" value="C:plasma membrane"/>
    <property type="evidence" value="ECO:0007669"/>
    <property type="project" value="UniProtKB-SubCell"/>
</dbReference>
<dbReference type="GO" id="GO:0045259">
    <property type="term" value="C:proton-transporting ATP synthase complex"/>
    <property type="evidence" value="ECO:0007669"/>
    <property type="project" value="UniProtKB-KW"/>
</dbReference>
<dbReference type="GO" id="GO:0046933">
    <property type="term" value="F:proton-transporting ATP synthase activity, rotational mechanism"/>
    <property type="evidence" value="ECO:0007669"/>
    <property type="project" value="UniProtKB-UniRule"/>
</dbReference>
<dbReference type="CDD" id="cd00310">
    <property type="entry name" value="ATP-synt_Fo_a_6"/>
    <property type="match status" value="1"/>
</dbReference>
<dbReference type="Gene3D" id="1.20.120.220">
    <property type="entry name" value="ATP synthase, F0 complex, subunit A"/>
    <property type="match status" value="1"/>
</dbReference>
<dbReference type="HAMAP" id="MF_01393">
    <property type="entry name" value="ATP_synth_a_bact"/>
    <property type="match status" value="1"/>
</dbReference>
<dbReference type="InterPro" id="IPR000568">
    <property type="entry name" value="ATP_synth_F0_asu"/>
</dbReference>
<dbReference type="InterPro" id="IPR023011">
    <property type="entry name" value="ATP_synth_F0_asu_AS"/>
</dbReference>
<dbReference type="InterPro" id="IPR045083">
    <property type="entry name" value="ATP_synth_F0_asu_bact/mt"/>
</dbReference>
<dbReference type="InterPro" id="IPR035908">
    <property type="entry name" value="F0_ATP_A_sf"/>
</dbReference>
<dbReference type="NCBIfam" id="TIGR01131">
    <property type="entry name" value="ATP_synt_6_or_A"/>
    <property type="match status" value="1"/>
</dbReference>
<dbReference type="NCBIfam" id="NF004482">
    <property type="entry name" value="PRK05815.2-4"/>
    <property type="match status" value="1"/>
</dbReference>
<dbReference type="PANTHER" id="PTHR11410">
    <property type="entry name" value="ATP SYNTHASE SUBUNIT A"/>
    <property type="match status" value="1"/>
</dbReference>
<dbReference type="PANTHER" id="PTHR11410:SF0">
    <property type="entry name" value="ATP SYNTHASE SUBUNIT A"/>
    <property type="match status" value="1"/>
</dbReference>
<dbReference type="Pfam" id="PF00119">
    <property type="entry name" value="ATP-synt_A"/>
    <property type="match status" value="1"/>
</dbReference>
<dbReference type="PRINTS" id="PR00123">
    <property type="entry name" value="ATPASEA"/>
</dbReference>
<dbReference type="SUPFAM" id="SSF81336">
    <property type="entry name" value="F1F0 ATP synthase subunit A"/>
    <property type="match status" value="1"/>
</dbReference>
<dbReference type="PROSITE" id="PS00449">
    <property type="entry name" value="ATPASE_A"/>
    <property type="match status" value="1"/>
</dbReference>
<evidence type="ECO:0000255" key="1">
    <source>
        <dbReference type="HAMAP-Rule" id="MF_01393"/>
    </source>
</evidence>